<comment type="catalytic activity">
    <reaction evidence="1">
        <text>tRNA(Trp) + L-tryptophan + ATP = L-tryptophyl-tRNA(Trp) + AMP + diphosphate + H(+)</text>
        <dbReference type="Rhea" id="RHEA:24080"/>
        <dbReference type="Rhea" id="RHEA-COMP:9671"/>
        <dbReference type="Rhea" id="RHEA-COMP:9705"/>
        <dbReference type="ChEBI" id="CHEBI:15378"/>
        <dbReference type="ChEBI" id="CHEBI:30616"/>
        <dbReference type="ChEBI" id="CHEBI:33019"/>
        <dbReference type="ChEBI" id="CHEBI:57912"/>
        <dbReference type="ChEBI" id="CHEBI:78442"/>
        <dbReference type="ChEBI" id="CHEBI:78535"/>
        <dbReference type="ChEBI" id="CHEBI:456215"/>
        <dbReference type="EC" id="6.1.1.2"/>
    </reaction>
</comment>
<comment type="subcellular location">
    <subcellularLocation>
        <location evidence="1">Cytoplasm</location>
    </subcellularLocation>
</comment>
<comment type="similarity">
    <text evidence="1">Belongs to the class-I aminoacyl-tRNA synthetase family.</text>
</comment>
<gene>
    <name evidence="1" type="primary">trpS</name>
    <name type="ordered locus">Pars_1612</name>
</gene>
<reference key="1">
    <citation type="submission" date="2007-04" db="EMBL/GenBank/DDBJ databases">
        <title>Complete sequence of Pyrobaculum arsenaticum DSM 13514.</title>
        <authorList>
            <consortium name="US DOE Joint Genome Institute"/>
            <person name="Copeland A."/>
            <person name="Lucas S."/>
            <person name="Lapidus A."/>
            <person name="Barry K."/>
            <person name="Glavina del Rio T."/>
            <person name="Dalin E."/>
            <person name="Tice H."/>
            <person name="Pitluck S."/>
            <person name="Chain P."/>
            <person name="Malfatti S."/>
            <person name="Shin M."/>
            <person name="Vergez L."/>
            <person name="Schmutz J."/>
            <person name="Larimer F."/>
            <person name="Land M."/>
            <person name="Hauser L."/>
            <person name="Kyrpides N."/>
            <person name="Mikhailova N."/>
            <person name="Cozen A.E."/>
            <person name="Fitz-Gibbon S.T."/>
            <person name="House C.H."/>
            <person name="Saltikov C."/>
            <person name="Lowe T.M."/>
            <person name="Richardson P."/>
        </authorList>
    </citation>
    <scope>NUCLEOTIDE SEQUENCE [LARGE SCALE GENOMIC DNA]</scope>
    <source>
        <strain>ATCC 700994 / DSM 13514 / JCM 11321 / PZ6</strain>
    </source>
</reference>
<keyword id="KW-0030">Aminoacyl-tRNA synthetase</keyword>
<keyword id="KW-0067">ATP-binding</keyword>
<keyword id="KW-0963">Cytoplasm</keyword>
<keyword id="KW-0436">Ligase</keyword>
<keyword id="KW-0547">Nucleotide-binding</keyword>
<keyword id="KW-0648">Protein biosynthesis</keyword>
<proteinExistence type="inferred from homology"/>
<sequence length="374" mass="42636">MGEDFVVTPWEVRGKVDYEKLLRQFGAKPLTAEEVALLEKYAGDVHPLIKRGFFYAHRDFDFILKWHGEGRPWALYTGRGPSGPVHIGHMVPWILLKWFSDKFGVEVYFQMTDDEKFFDDPEMKLEEATGWAYENALDVIALGFGPDKLHLIVDTKDIAPLYPIAVRVAKKLTWNTVKATFGFTDSSNIGLIFYPSLQIAVAFLPTELKKEPTPVLIPCAIDQDPYFRLARDIADSLSYPKPTTLYSKFIMALTGESKMSASNPDSAIYTMDDDKTVKHKILNAFTGGRPTAEEQRKYGGNPDICPVFHYHMLFDPDDASVEKIRQDCKSGALLCGECKLKLHEKISKFLKEHRERREKARGKVDEYRLSVKLK</sequence>
<protein>
    <recommendedName>
        <fullName evidence="1">Tryptophan--tRNA ligase</fullName>
        <ecNumber evidence="1">6.1.1.2</ecNumber>
    </recommendedName>
    <alternativeName>
        <fullName evidence="1">Tryptophanyl-tRNA synthetase</fullName>
        <shortName evidence="1">TrpRS</shortName>
    </alternativeName>
</protein>
<organism>
    <name type="scientific">Pyrobaculum arsenaticum (strain DSM 13514 / JCM 11321 / PZ6)</name>
    <dbReference type="NCBI Taxonomy" id="340102"/>
    <lineage>
        <taxon>Archaea</taxon>
        <taxon>Thermoproteota</taxon>
        <taxon>Thermoprotei</taxon>
        <taxon>Thermoproteales</taxon>
        <taxon>Thermoproteaceae</taxon>
        <taxon>Pyrobaculum</taxon>
    </lineage>
</organism>
<accession>A4WL99</accession>
<feature type="chain" id="PRO_1000018996" description="Tryptophan--tRNA ligase">
    <location>
        <begin position="1"/>
        <end position="374"/>
    </location>
</feature>
<feature type="short sequence motif" description="'HIGH' region">
    <location>
        <begin position="81"/>
        <end position="89"/>
    </location>
</feature>
<feature type="short sequence motif" description="'KMSKS' region">
    <location>
        <begin position="258"/>
        <end position="262"/>
    </location>
</feature>
<name>SYW_PYRAR</name>
<dbReference type="EC" id="6.1.1.2" evidence="1"/>
<dbReference type="EMBL" id="CP000660">
    <property type="protein sequence ID" value="ABP51166.1"/>
    <property type="molecule type" value="Genomic_DNA"/>
</dbReference>
<dbReference type="RefSeq" id="WP_011901073.1">
    <property type="nucleotide sequence ID" value="NC_009376.1"/>
</dbReference>
<dbReference type="SMR" id="A4WL99"/>
<dbReference type="STRING" id="340102.Pars_1612"/>
<dbReference type="GeneID" id="5056275"/>
<dbReference type="KEGG" id="pas:Pars_1612"/>
<dbReference type="HOGENOM" id="CLU_032621_0_1_2"/>
<dbReference type="OrthoDB" id="371821at2157"/>
<dbReference type="PhylomeDB" id="A4WL99"/>
<dbReference type="Proteomes" id="UP000001567">
    <property type="component" value="Chromosome"/>
</dbReference>
<dbReference type="GO" id="GO:0005737">
    <property type="term" value="C:cytoplasm"/>
    <property type="evidence" value="ECO:0007669"/>
    <property type="project" value="UniProtKB-SubCell"/>
</dbReference>
<dbReference type="GO" id="GO:0005524">
    <property type="term" value="F:ATP binding"/>
    <property type="evidence" value="ECO:0007669"/>
    <property type="project" value="UniProtKB-UniRule"/>
</dbReference>
<dbReference type="GO" id="GO:0004830">
    <property type="term" value="F:tryptophan-tRNA ligase activity"/>
    <property type="evidence" value="ECO:0007669"/>
    <property type="project" value="UniProtKB-UniRule"/>
</dbReference>
<dbReference type="GO" id="GO:0006436">
    <property type="term" value="P:tryptophanyl-tRNA aminoacylation"/>
    <property type="evidence" value="ECO:0007669"/>
    <property type="project" value="UniProtKB-UniRule"/>
</dbReference>
<dbReference type="CDD" id="cd00806">
    <property type="entry name" value="TrpRS_core"/>
    <property type="match status" value="1"/>
</dbReference>
<dbReference type="FunFam" id="1.10.240.10:FF:000007">
    <property type="entry name" value="Tryptophan--tRNA ligase"/>
    <property type="match status" value="1"/>
</dbReference>
<dbReference type="Gene3D" id="3.40.50.620">
    <property type="entry name" value="HUPs"/>
    <property type="match status" value="1"/>
</dbReference>
<dbReference type="Gene3D" id="1.10.240.10">
    <property type="entry name" value="Tyrosyl-Transfer RNA Synthetase"/>
    <property type="match status" value="1"/>
</dbReference>
<dbReference type="HAMAP" id="MF_00140_A">
    <property type="entry name" value="Trp_tRNA_synth_A"/>
    <property type="match status" value="1"/>
</dbReference>
<dbReference type="InterPro" id="IPR001412">
    <property type="entry name" value="aa-tRNA-synth_I_CS"/>
</dbReference>
<dbReference type="InterPro" id="IPR002305">
    <property type="entry name" value="aa-tRNA-synth_Ic"/>
</dbReference>
<dbReference type="InterPro" id="IPR014729">
    <property type="entry name" value="Rossmann-like_a/b/a_fold"/>
</dbReference>
<dbReference type="InterPro" id="IPR002306">
    <property type="entry name" value="Trp-tRNA-ligase"/>
</dbReference>
<dbReference type="InterPro" id="IPR020653">
    <property type="entry name" value="Tryptophan-tRNA-ligase_arc"/>
</dbReference>
<dbReference type="NCBIfam" id="NF008927">
    <property type="entry name" value="PRK12285.1-4"/>
    <property type="match status" value="1"/>
</dbReference>
<dbReference type="NCBIfam" id="TIGR00233">
    <property type="entry name" value="trpS"/>
    <property type="match status" value="1"/>
</dbReference>
<dbReference type="PANTHER" id="PTHR10055:SF1">
    <property type="entry name" value="TRYPTOPHAN--TRNA LIGASE, CYTOPLASMIC"/>
    <property type="match status" value="1"/>
</dbReference>
<dbReference type="PANTHER" id="PTHR10055">
    <property type="entry name" value="TRYPTOPHANYL-TRNA SYNTHETASE"/>
    <property type="match status" value="1"/>
</dbReference>
<dbReference type="Pfam" id="PF00579">
    <property type="entry name" value="tRNA-synt_1b"/>
    <property type="match status" value="1"/>
</dbReference>
<dbReference type="PRINTS" id="PR01039">
    <property type="entry name" value="TRNASYNTHTRP"/>
</dbReference>
<dbReference type="SUPFAM" id="SSF52374">
    <property type="entry name" value="Nucleotidylyl transferase"/>
    <property type="match status" value="1"/>
</dbReference>
<dbReference type="PROSITE" id="PS00178">
    <property type="entry name" value="AA_TRNA_LIGASE_I"/>
    <property type="match status" value="1"/>
</dbReference>
<evidence type="ECO:0000255" key="1">
    <source>
        <dbReference type="HAMAP-Rule" id="MF_00140"/>
    </source>
</evidence>